<comment type="subunit">
    <text evidence="4">Interacts with ZNF106.</text>
</comment>
<comment type="subcellular location">
    <subcellularLocation>
        <location evidence="3 4">Nucleus</location>
        <location evidence="3 4">Nucleolus</location>
    </subcellularLocation>
</comment>
<comment type="alternative products">
    <event type="alternative splicing"/>
    <isoform>
        <id>Q9Z2Q2-1</id>
        <name>1</name>
        <sequence type="displayed"/>
    </isoform>
    <isoform>
        <id>Q9Z2Q2-2</id>
        <name>2</name>
        <sequence type="described" ref="VSP_031834"/>
    </isoform>
    <isoform>
        <id>Q9Z2Q2-3</id>
        <name>3</name>
        <sequence type="described" ref="VSP_031835"/>
    </isoform>
</comment>
<comment type="tissue specificity">
    <text evidence="4">Expressed in testis.</text>
</comment>
<comment type="induction">
    <text evidence="4">Down-regulated during myoblast differentiation.</text>
</comment>
<comment type="sequence caution" evidence="7">
    <conflict type="erroneous initiation">
        <sequence resource="EMBL-CDS" id="AAD01984"/>
    </conflict>
    <text>Extended N-terminus.</text>
</comment>
<evidence type="ECO:0000250" key="1">
    <source>
        <dbReference type="UniProtKB" id="Q1ED39"/>
    </source>
</evidence>
<evidence type="ECO:0000256" key="2">
    <source>
        <dbReference type="SAM" id="MobiDB-lite"/>
    </source>
</evidence>
<evidence type="ECO:0000269" key="3">
    <source>
    </source>
</evidence>
<evidence type="ECO:0000269" key="4">
    <source>
    </source>
</evidence>
<evidence type="ECO:0000303" key="5">
    <source>
    </source>
</evidence>
<evidence type="ECO:0000303" key="6">
    <source>
    </source>
</evidence>
<evidence type="ECO:0000305" key="7"/>
<evidence type="ECO:0007744" key="8">
    <source>
    </source>
</evidence>
<gene>
    <name type="primary">Knop1</name>
    <name type="synonym">Tsg118</name>
</gene>
<name>KNOP1_MOUSE</name>
<organism>
    <name type="scientific">Mus musculus</name>
    <name type="common">Mouse</name>
    <dbReference type="NCBI Taxonomy" id="10090"/>
    <lineage>
        <taxon>Eukaryota</taxon>
        <taxon>Metazoa</taxon>
        <taxon>Chordata</taxon>
        <taxon>Craniata</taxon>
        <taxon>Vertebrata</taxon>
        <taxon>Euteleostomi</taxon>
        <taxon>Mammalia</taxon>
        <taxon>Eutheria</taxon>
        <taxon>Euarchontoglires</taxon>
        <taxon>Glires</taxon>
        <taxon>Rodentia</taxon>
        <taxon>Myomorpha</taxon>
        <taxon>Muroidea</taxon>
        <taxon>Muridae</taxon>
        <taxon>Murinae</taxon>
        <taxon>Mus</taxon>
        <taxon>Mus</taxon>
    </lineage>
</organism>
<accession>Q9Z2Q2</accession>
<accession>Q3TKK6</accession>
<accession>Q7TMJ4</accession>
<accession>Q8BJI0</accession>
<accession>Q9D7H7</accession>
<reference key="1">
    <citation type="journal article" date="1999" name="Eur. J. Cell Biol.">
        <title>Characterization of a novel nucleolar protein that transiently associates with the condensed chromosomes in mitotic cells.</title>
        <authorList>
            <person name="Larsson M."/>
            <person name="Brundell E."/>
            <person name="Joergensen P.M."/>
            <person name="Staehl S."/>
            <person name="Hoeoeg C."/>
        </authorList>
    </citation>
    <scope>NUCLEOTIDE SEQUENCE [MRNA] (ISOFORM 1)</scope>
    <scope>SUBCELLULAR LOCATION</scope>
</reference>
<reference key="2">
    <citation type="journal article" date="2005" name="Science">
        <title>The transcriptional landscape of the mammalian genome.</title>
        <authorList>
            <person name="Carninci P."/>
            <person name="Kasukawa T."/>
            <person name="Katayama S."/>
            <person name="Gough J."/>
            <person name="Frith M.C."/>
            <person name="Maeda N."/>
            <person name="Oyama R."/>
            <person name="Ravasi T."/>
            <person name="Lenhard B."/>
            <person name="Wells C."/>
            <person name="Kodzius R."/>
            <person name="Shimokawa K."/>
            <person name="Bajic V.B."/>
            <person name="Brenner S.E."/>
            <person name="Batalov S."/>
            <person name="Forrest A.R."/>
            <person name="Zavolan M."/>
            <person name="Davis M.J."/>
            <person name="Wilming L.G."/>
            <person name="Aidinis V."/>
            <person name="Allen J.E."/>
            <person name="Ambesi-Impiombato A."/>
            <person name="Apweiler R."/>
            <person name="Aturaliya R.N."/>
            <person name="Bailey T.L."/>
            <person name="Bansal M."/>
            <person name="Baxter L."/>
            <person name="Beisel K.W."/>
            <person name="Bersano T."/>
            <person name="Bono H."/>
            <person name="Chalk A.M."/>
            <person name="Chiu K.P."/>
            <person name="Choudhary V."/>
            <person name="Christoffels A."/>
            <person name="Clutterbuck D.R."/>
            <person name="Crowe M.L."/>
            <person name="Dalla E."/>
            <person name="Dalrymple B.P."/>
            <person name="de Bono B."/>
            <person name="Della Gatta G."/>
            <person name="di Bernardo D."/>
            <person name="Down T."/>
            <person name="Engstrom P."/>
            <person name="Fagiolini M."/>
            <person name="Faulkner G."/>
            <person name="Fletcher C.F."/>
            <person name="Fukushima T."/>
            <person name="Furuno M."/>
            <person name="Futaki S."/>
            <person name="Gariboldi M."/>
            <person name="Georgii-Hemming P."/>
            <person name="Gingeras T.R."/>
            <person name="Gojobori T."/>
            <person name="Green R.E."/>
            <person name="Gustincich S."/>
            <person name="Harbers M."/>
            <person name="Hayashi Y."/>
            <person name="Hensch T.K."/>
            <person name="Hirokawa N."/>
            <person name="Hill D."/>
            <person name="Huminiecki L."/>
            <person name="Iacono M."/>
            <person name="Ikeo K."/>
            <person name="Iwama A."/>
            <person name="Ishikawa T."/>
            <person name="Jakt M."/>
            <person name="Kanapin A."/>
            <person name="Katoh M."/>
            <person name="Kawasawa Y."/>
            <person name="Kelso J."/>
            <person name="Kitamura H."/>
            <person name="Kitano H."/>
            <person name="Kollias G."/>
            <person name="Krishnan S.P."/>
            <person name="Kruger A."/>
            <person name="Kummerfeld S.K."/>
            <person name="Kurochkin I.V."/>
            <person name="Lareau L.F."/>
            <person name="Lazarevic D."/>
            <person name="Lipovich L."/>
            <person name="Liu J."/>
            <person name="Liuni S."/>
            <person name="McWilliam S."/>
            <person name="Madan Babu M."/>
            <person name="Madera M."/>
            <person name="Marchionni L."/>
            <person name="Matsuda H."/>
            <person name="Matsuzawa S."/>
            <person name="Miki H."/>
            <person name="Mignone F."/>
            <person name="Miyake S."/>
            <person name="Morris K."/>
            <person name="Mottagui-Tabar S."/>
            <person name="Mulder N."/>
            <person name="Nakano N."/>
            <person name="Nakauchi H."/>
            <person name="Ng P."/>
            <person name="Nilsson R."/>
            <person name="Nishiguchi S."/>
            <person name="Nishikawa S."/>
            <person name="Nori F."/>
            <person name="Ohara O."/>
            <person name="Okazaki Y."/>
            <person name="Orlando V."/>
            <person name="Pang K.C."/>
            <person name="Pavan W.J."/>
            <person name="Pavesi G."/>
            <person name="Pesole G."/>
            <person name="Petrovsky N."/>
            <person name="Piazza S."/>
            <person name="Reed J."/>
            <person name="Reid J.F."/>
            <person name="Ring B.Z."/>
            <person name="Ringwald M."/>
            <person name="Rost B."/>
            <person name="Ruan Y."/>
            <person name="Salzberg S.L."/>
            <person name="Sandelin A."/>
            <person name="Schneider C."/>
            <person name="Schoenbach C."/>
            <person name="Sekiguchi K."/>
            <person name="Semple C.A."/>
            <person name="Seno S."/>
            <person name="Sessa L."/>
            <person name="Sheng Y."/>
            <person name="Shibata Y."/>
            <person name="Shimada H."/>
            <person name="Shimada K."/>
            <person name="Silva D."/>
            <person name="Sinclair B."/>
            <person name="Sperling S."/>
            <person name="Stupka E."/>
            <person name="Sugiura K."/>
            <person name="Sultana R."/>
            <person name="Takenaka Y."/>
            <person name="Taki K."/>
            <person name="Tammoja K."/>
            <person name="Tan S.L."/>
            <person name="Tang S."/>
            <person name="Taylor M.S."/>
            <person name="Tegner J."/>
            <person name="Teichmann S.A."/>
            <person name="Ueda H.R."/>
            <person name="van Nimwegen E."/>
            <person name="Verardo R."/>
            <person name="Wei C.L."/>
            <person name="Yagi K."/>
            <person name="Yamanishi H."/>
            <person name="Zabarovsky E."/>
            <person name="Zhu S."/>
            <person name="Zimmer A."/>
            <person name="Hide W."/>
            <person name="Bult C."/>
            <person name="Grimmond S.M."/>
            <person name="Teasdale R.D."/>
            <person name="Liu E.T."/>
            <person name="Brusic V."/>
            <person name="Quackenbush J."/>
            <person name="Wahlestedt C."/>
            <person name="Mattick J.S."/>
            <person name="Hume D.A."/>
            <person name="Kai C."/>
            <person name="Sasaki D."/>
            <person name="Tomaru Y."/>
            <person name="Fukuda S."/>
            <person name="Kanamori-Katayama M."/>
            <person name="Suzuki M."/>
            <person name="Aoki J."/>
            <person name="Arakawa T."/>
            <person name="Iida J."/>
            <person name="Imamura K."/>
            <person name="Itoh M."/>
            <person name="Kato T."/>
            <person name="Kawaji H."/>
            <person name="Kawagashira N."/>
            <person name="Kawashima T."/>
            <person name="Kojima M."/>
            <person name="Kondo S."/>
            <person name="Konno H."/>
            <person name="Nakano K."/>
            <person name="Ninomiya N."/>
            <person name="Nishio T."/>
            <person name="Okada M."/>
            <person name="Plessy C."/>
            <person name="Shibata K."/>
            <person name="Shiraki T."/>
            <person name="Suzuki S."/>
            <person name="Tagami M."/>
            <person name="Waki K."/>
            <person name="Watahiki A."/>
            <person name="Okamura-Oho Y."/>
            <person name="Suzuki H."/>
            <person name="Kawai J."/>
            <person name="Hayashizaki Y."/>
        </authorList>
    </citation>
    <scope>NUCLEOTIDE SEQUENCE [LARGE SCALE MRNA] (ISOFORMS 1; 2 AND 3)</scope>
    <source>
        <strain>C57BL/6J</strain>
        <tissue>Spinal ganglion</tissue>
        <tissue>Tongue</tissue>
    </source>
</reference>
<reference key="3">
    <citation type="journal article" date="2004" name="Genome Res.">
        <title>The status, quality, and expansion of the NIH full-length cDNA project: the Mammalian Gene Collection (MGC).</title>
        <authorList>
            <consortium name="The MGC Project Team"/>
        </authorList>
    </citation>
    <scope>NUCLEOTIDE SEQUENCE [LARGE SCALE MRNA] (ISOFORM 2)</scope>
    <source>
        <strain>Czech II</strain>
        <tissue>Mammary tumor</tissue>
    </source>
</reference>
<reference key="4">
    <citation type="journal article" date="2005" name="Int. J. Biochem. Cell Biol.">
        <title>Subcellular recruitment by TSG118 and TSPYL implicates a role for zinc finger protein 106 in a novel developmental pathway.</title>
        <authorList>
            <person name="Grasberger H."/>
            <person name="Bell G.I."/>
        </authorList>
    </citation>
    <scope>INTERACTION WITH ZNF106</scope>
    <scope>TISSUE SPECIFICITY</scope>
    <scope>SUBCELLULAR LOCATION</scope>
    <scope>INDUCTION</scope>
</reference>
<reference key="5">
    <citation type="journal article" date="2010" name="Cell">
        <title>A tissue-specific atlas of mouse protein phosphorylation and expression.</title>
        <authorList>
            <person name="Huttlin E.L."/>
            <person name="Jedrychowski M.P."/>
            <person name="Elias J.E."/>
            <person name="Goswami T."/>
            <person name="Rad R."/>
            <person name="Beausoleil S.A."/>
            <person name="Villen J."/>
            <person name="Haas W."/>
            <person name="Sowa M.E."/>
            <person name="Gygi S.P."/>
        </authorList>
    </citation>
    <scope>PHOSPHORYLATION [LARGE SCALE ANALYSIS] AT SER-261 AND SER-312</scope>
    <scope>IDENTIFICATION BY MASS SPECTROMETRY [LARGE SCALE ANALYSIS]</scope>
    <source>
        <tissue>Kidney</tissue>
        <tissue>Spleen</tissue>
        <tissue>Testis</tissue>
    </source>
</reference>
<keyword id="KW-0025">Alternative splicing</keyword>
<keyword id="KW-1017">Isopeptide bond</keyword>
<keyword id="KW-0539">Nucleus</keyword>
<keyword id="KW-0597">Phosphoprotein</keyword>
<keyword id="KW-1185">Reference proteome</keyword>
<keyword id="KW-0832">Ubl conjugation</keyword>
<dbReference type="EMBL" id="AF034580">
    <property type="protein sequence ID" value="AAD01984.1"/>
    <property type="status" value="ALT_INIT"/>
    <property type="molecule type" value="mRNA"/>
</dbReference>
<dbReference type="EMBL" id="AK009230">
    <property type="protein sequence ID" value="BAB26153.1"/>
    <property type="molecule type" value="mRNA"/>
</dbReference>
<dbReference type="EMBL" id="AK083845">
    <property type="protein sequence ID" value="BAC39038.1"/>
    <property type="molecule type" value="mRNA"/>
</dbReference>
<dbReference type="EMBL" id="AK166956">
    <property type="protein sequence ID" value="BAE39139.1"/>
    <property type="molecule type" value="mRNA"/>
</dbReference>
<dbReference type="EMBL" id="BC055941">
    <property type="protein sequence ID" value="AAH55941.1"/>
    <property type="molecule type" value="mRNA"/>
</dbReference>
<dbReference type="CCDS" id="CCDS52375.1">
    <molecule id="Q9Z2Q2-2"/>
</dbReference>
<dbReference type="CCDS" id="CCDS52376.1">
    <molecule id="Q9Z2Q2-3"/>
</dbReference>
<dbReference type="CCDS" id="CCDS52377.1">
    <molecule id="Q9Z2Q2-2"/>
</dbReference>
<dbReference type="RefSeq" id="NP_001161690.2">
    <molecule id="Q9Z2Q2-2"/>
    <property type="nucleotide sequence ID" value="NM_001168218.2"/>
</dbReference>
<dbReference type="RefSeq" id="NP_001161691.2">
    <molecule id="Q9Z2Q2-3"/>
    <property type="nucleotide sequence ID" value="NM_001168219.2"/>
</dbReference>
<dbReference type="RefSeq" id="NP_001161692.1">
    <molecule id="Q9Z2Q2-2"/>
    <property type="nucleotide sequence ID" value="NM_001168220.2"/>
</dbReference>
<dbReference type="RefSeq" id="NP_075686.2">
    <property type="nucleotide sequence ID" value="NM_023197.3"/>
</dbReference>
<dbReference type="FunCoup" id="Q9Z2Q2">
    <property type="interactions" value="771"/>
</dbReference>
<dbReference type="IntAct" id="Q9Z2Q2">
    <property type="interactions" value="1"/>
</dbReference>
<dbReference type="STRING" id="10090.ENSMUSP00000102160"/>
<dbReference type="iPTMnet" id="Q9Z2Q2"/>
<dbReference type="PhosphoSitePlus" id="Q9Z2Q2"/>
<dbReference type="jPOST" id="Q9Z2Q2"/>
<dbReference type="ProteomicsDB" id="264790">
    <molecule id="Q9Z2Q2-1"/>
</dbReference>
<dbReference type="ProteomicsDB" id="264791">
    <molecule id="Q9Z2Q2-2"/>
</dbReference>
<dbReference type="ProteomicsDB" id="264792">
    <molecule id="Q9Z2Q2-3"/>
</dbReference>
<dbReference type="Pumba" id="Q9Z2Q2"/>
<dbReference type="Antibodypedia" id="52534">
    <property type="antibodies" value="21 antibodies from 9 providers"/>
</dbReference>
<dbReference type="Ensembl" id="ENSMUST00000063607.12">
    <molecule id="Q9Z2Q2-2"/>
    <property type="protein sequence ID" value="ENSMUSP00000068142.7"/>
    <property type="gene ID" value="ENSMUSG00000030980.19"/>
</dbReference>
<dbReference type="Ensembl" id="ENSMUST00000106549.9">
    <molecule id="Q9Z2Q2-2"/>
    <property type="protein sequence ID" value="ENSMUSP00000102159.2"/>
    <property type="gene ID" value="ENSMUSG00000030980.19"/>
</dbReference>
<dbReference type="Ensembl" id="ENSMUST00000126792.9">
    <molecule id="Q9Z2Q2-3"/>
    <property type="protein sequence ID" value="ENSMUSP00000114727.4"/>
    <property type="gene ID" value="ENSMUSG00000030980.19"/>
</dbReference>
<dbReference type="GeneID" id="66356"/>
<dbReference type="KEGG" id="mmu:66356"/>
<dbReference type="UCSC" id="uc009jkq.2">
    <molecule id="Q9Z2Q2-2"/>
    <property type="organism name" value="mouse"/>
</dbReference>
<dbReference type="AGR" id="MGI:1913606"/>
<dbReference type="CTD" id="400506"/>
<dbReference type="MGI" id="MGI:1913606">
    <property type="gene designation" value="Knop1"/>
</dbReference>
<dbReference type="VEuPathDB" id="HostDB:ENSMUSG00000030980"/>
<dbReference type="eggNOG" id="ENOG502S1WB">
    <property type="taxonomic scope" value="Eukaryota"/>
</dbReference>
<dbReference type="GeneTree" id="ENSGT00500000044955"/>
<dbReference type="HOGENOM" id="CLU_048750_0_0_1"/>
<dbReference type="InParanoid" id="Q9Z2Q2"/>
<dbReference type="PhylomeDB" id="Q9Z2Q2"/>
<dbReference type="BioGRID-ORCS" id="66356">
    <property type="hits" value="0 hits in 80 CRISPR screens"/>
</dbReference>
<dbReference type="ChiTaRS" id="Knop1">
    <property type="organism name" value="mouse"/>
</dbReference>
<dbReference type="PRO" id="PR:Q9Z2Q2"/>
<dbReference type="Proteomes" id="UP000000589">
    <property type="component" value="Chromosome 7"/>
</dbReference>
<dbReference type="RNAct" id="Q9Z2Q2">
    <property type="molecule type" value="protein"/>
</dbReference>
<dbReference type="Bgee" id="ENSMUSG00000030980">
    <property type="expression patterns" value="Expressed in metanephric loop of Henle and 256 other cell types or tissues"/>
</dbReference>
<dbReference type="ExpressionAtlas" id="Q9Z2Q2">
    <property type="expression patterns" value="baseline and differential"/>
</dbReference>
<dbReference type="GO" id="GO:0005730">
    <property type="term" value="C:nucleolus"/>
    <property type="evidence" value="ECO:0007669"/>
    <property type="project" value="UniProtKB-SubCell"/>
</dbReference>
<dbReference type="InterPro" id="IPR028124">
    <property type="entry name" value="SMAP_dom"/>
</dbReference>
<dbReference type="PANTHER" id="PTHR22426">
    <property type="entry name" value="ARGININE_SERINE-RICH COILED-COIL PROTEIN 2"/>
    <property type="match status" value="1"/>
</dbReference>
<dbReference type="PANTHER" id="PTHR22426:SF1">
    <property type="entry name" value="LYSINE-RICH NUCLEOLAR PROTEIN 1"/>
    <property type="match status" value="1"/>
</dbReference>
<dbReference type="Pfam" id="PF15477">
    <property type="entry name" value="SMAP"/>
    <property type="match status" value="1"/>
</dbReference>
<sequence>MVSKTQKADLGPQLPEKKKKKKKKKRVVANVSEPETQYSVLNSNDYFIDASPPRATSPSNNVDEVQIPEISLSKRKKKKKSCSTHLEECLGAEPTRARQKKSPSPRRQALEQSAEGLIREKKKKRRKSLSKAASQGSGLKTSPDPKHAKEVSKAGRKSKKQRKEKKVPDTEALPPQDAWLYEAGDSLHSCLEGAEAEEQAALGQKRKQGSPRDHNMKKKKKTHQEGDILLVNSRVSVENSLKKGSKKSVKSEALEFVPIDSPKAPGKKKVKSKKKVEQPVGEGLAVKRKKKKKKRKENGVKEDPWQEEKEESDTDLEVVLEKKGNMDETCIDQVRRKALQEEIDRESGKTEASEPKKWTVGLSVKTEASEPKKWTGTQFGQWDTAGFENEEQKLKFLKLMGGFKHLSPSFSRPPSMTIRSNMALDKKSSEMLQQSLQQDYDRAMSWKYSHGAGLGFNSEARKVFYIDRNASKSIKLQD</sequence>
<proteinExistence type="evidence at protein level"/>
<feature type="chain" id="PRO_0000321939" description="Lysine-rich nucleolar protein 1">
    <location>
        <begin position="1"/>
        <end position="478"/>
    </location>
</feature>
<feature type="region of interest" description="Disordered" evidence="2">
    <location>
        <begin position="1"/>
        <end position="231"/>
    </location>
</feature>
<feature type="region of interest" description="Disordered" evidence="2">
    <location>
        <begin position="258"/>
        <end position="314"/>
    </location>
</feature>
<feature type="region of interest" description="Interaction with ZNF106" evidence="4">
    <location>
        <begin position="310"/>
        <end position="478"/>
    </location>
</feature>
<feature type="region of interest" description="Disordered" evidence="2">
    <location>
        <begin position="340"/>
        <end position="378"/>
    </location>
</feature>
<feature type="compositionally biased region" description="Basic residues" evidence="2">
    <location>
        <begin position="17"/>
        <end position="27"/>
    </location>
</feature>
<feature type="compositionally biased region" description="Polar residues" evidence="2">
    <location>
        <begin position="33"/>
        <end position="45"/>
    </location>
</feature>
<feature type="compositionally biased region" description="Polar residues" evidence="2">
    <location>
        <begin position="54"/>
        <end position="63"/>
    </location>
</feature>
<feature type="compositionally biased region" description="Basic residues" evidence="2">
    <location>
        <begin position="73"/>
        <end position="82"/>
    </location>
</feature>
<feature type="compositionally biased region" description="Basic residues" evidence="2">
    <location>
        <begin position="120"/>
        <end position="129"/>
    </location>
</feature>
<feature type="compositionally biased region" description="Basic and acidic residues" evidence="2">
    <location>
        <begin position="143"/>
        <end position="153"/>
    </location>
</feature>
<feature type="compositionally biased region" description="Basic residues" evidence="2">
    <location>
        <begin position="154"/>
        <end position="165"/>
    </location>
</feature>
<feature type="compositionally biased region" description="Basic residues" evidence="2">
    <location>
        <begin position="204"/>
        <end position="222"/>
    </location>
</feature>
<feature type="compositionally biased region" description="Basic residues" evidence="2">
    <location>
        <begin position="265"/>
        <end position="274"/>
    </location>
</feature>
<feature type="compositionally biased region" description="Basic residues" evidence="2">
    <location>
        <begin position="286"/>
        <end position="296"/>
    </location>
</feature>
<feature type="compositionally biased region" description="Basic and acidic residues" evidence="2">
    <location>
        <begin position="297"/>
        <end position="307"/>
    </location>
</feature>
<feature type="compositionally biased region" description="Basic and acidic residues" evidence="2">
    <location>
        <begin position="340"/>
        <end position="357"/>
    </location>
</feature>
<feature type="modified residue" description="Phosphoserine" evidence="1">
    <location>
        <position position="51"/>
    </location>
</feature>
<feature type="modified residue" description="Phosphoserine" evidence="1">
    <location>
        <position position="59"/>
    </location>
</feature>
<feature type="modified residue" description="Phosphoserine" evidence="1">
    <location>
        <position position="142"/>
    </location>
</feature>
<feature type="modified residue" description="Phosphoserine" evidence="8">
    <location>
        <position position="261"/>
    </location>
</feature>
<feature type="modified residue" description="Phosphoserine" evidence="8">
    <location>
        <position position="312"/>
    </location>
</feature>
<feature type="modified residue" description="Phosphothreonine" evidence="1">
    <location>
        <position position="314"/>
    </location>
</feature>
<feature type="cross-link" description="Glycyl lysine isopeptide (Lys-Gly) (interchain with G-Cter in SUMO2)" evidence="1">
    <location>
        <position position="7"/>
    </location>
</feature>
<feature type="cross-link" description="Glycyl lysine isopeptide (Lys-Gly) (interchain with G-Cter in SUMO2)" evidence="1">
    <location>
        <position position="140"/>
    </location>
</feature>
<feature type="cross-link" description="Glycyl lysine isopeptide (Lys-Gly) (interchain with G-Cter in SUMO1); alternate" evidence="1">
    <location>
        <position position="250"/>
    </location>
</feature>
<feature type="cross-link" description="Glycyl lysine isopeptide (Lys-Gly) (interchain with G-Cter in SUMO2); alternate" evidence="1">
    <location>
        <position position="250"/>
    </location>
</feature>
<feature type="cross-link" description="Glycyl lysine isopeptide (Lys-Gly) (interchain with G-Cter in SUMO2)" evidence="1">
    <location>
        <position position="275"/>
    </location>
</feature>
<feature type="cross-link" description="Glycyl lysine isopeptide (Lys-Gly) (interchain with G-Cter in SUMO2)" evidence="1">
    <location>
        <position position="287"/>
    </location>
</feature>
<feature type="cross-link" description="Glycyl lysine isopeptide (Lys-Gly) (interchain with G-Cter in SUMO2)" evidence="1">
    <location>
        <position position="309"/>
    </location>
</feature>
<feature type="cross-link" description="Glycyl lysine isopeptide (Lys-Gly) (interchain with G-Cter in SUMO2)" evidence="1">
    <location>
        <position position="323"/>
    </location>
</feature>
<feature type="cross-link" description="Glycyl lysine isopeptide (Lys-Gly) (interchain with G-Cter in SUMO2)" evidence="1">
    <location>
        <position position="373"/>
    </location>
</feature>
<feature type="cross-link" description="Glycyl lysine isopeptide (Lys-Gly) (interchain with G-Cter in SUMO2)" evidence="1">
    <location>
        <position position="393"/>
    </location>
</feature>
<feature type="cross-link" description="Glycyl lysine isopeptide (Lys-Gly) (interchain with G-Cter in SUMO2)" evidence="1">
    <location>
        <position position="395"/>
    </location>
</feature>
<feature type="cross-link" description="Glycyl lysine isopeptide (Lys-Gly) (interchain with G-Cter in SUMO2)" evidence="1">
    <location>
        <position position="427"/>
    </location>
</feature>
<feature type="cross-link" description="Glycyl lysine isopeptide (Lys-Gly) (interchain with G-Cter in SUMO2)" evidence="1">
    <location>
        <position position="462"/>
    </location>
</feature>
<feature type="splice variant" id="VSP_031834" description="In isoform 2." evidence="5 6">
    <location>
        <begin position="149"/>
        <end position="308"/>
    </location>
</feature>
<feature type="splice variant" id="VSP_031835" description="In isoform 3." evidence="6">
    <location>
        <begin position="151"/>
        <end position="333"/>
    </location>
</feature>
<feature type="sequence conflict" description="In Ref. 1; AAD01984 and 3; AAH55941." evidence="7" ref="1 3">
    <original>I</original>
    <variation>M</variation>
    <location>
        <position position="70"/>
    </location>
</feature>
<feature type="sequence conflict" description="In Ref. 3; BAE39139." evidence="7" ref="3">
    <original>M</original>
    <variation>MK</variation>
    <location>
        <position position="216"/>
    </location>
</feature>
<feature type="sequence conflict" description="In Ref. 3; BAB26153." evidence="7" ref="3">
    <original>S</original>
    <variation>L</variation>
    <location>
        <position position="347"/>
    </location>
</feature>
<protein>
    <recommendedName>
        <fullName>Lysine-rich nucleolar protein 1</fullName>
    </recommendedName>
    <alternativeName>
        <fullName>Testis-specific gene 118 protein</fullName>
    </alternativeName>
</protein>